<gene>
    <name evidence="1" type="primary">rlmE</name>
    <name evidence="1" type="synonym">ftsJ</name>
    <name evidence="1" type="synonym">rrmJ</name>
    <name type="ordered locus">CV_3798</name>
</gene>
<protein>
    <recommendedName>
        <fullName evidence="1">Ribosomal RNA large subunit methyltransferase E</fullName>
        <ecNumber evidence="1">2.1.1.166</ecNumber>
    </recommendedName>
    <alternativeName>
        <fullName evidence="1">23S rRNA Um2552 methyltransferase</fullName>
    </alternativeName>
    <alternativeName>
        <fullName evidence="1">rRNA (uridine-2'-O-)-methyltransferase</fullName>
    </alternativeName>
</protein>
<keyword id="KW-0963">Cytoplasm</keyword>
<keyword id="KW-0489">Methyltransferase</keyword>
<keyword id="KW-1185">Reference proteome</keyword>
<keyword id="KW-0698">rRNA processing</keyword>
<keyword id="KW-0949">S-adenosyl-L-methionine</keyword>
<keyword id="KW-0808">Transferase</keyword>
<feature type="chain" id="PRO_0000155487" description="Ribosomal RNA large subunit methyltransferase E">
    <location>
        <begin position="1"/>
        <end position="205"/>
    </location>
</feature>
<feature type="active site" description="Proton acceptor" evidence="1">
    <location>
        <position position="161"/>
    </location>
</feature>
<feature type="binding site" evidence="1">
    <location>
        <position position="60"/>
    </location>
    <ligand>
        <name>S-adenosyl-L-methionine</name>
        <dbReference type="ChEBI" id="CHEBI:59789"/>
    </ligand>
</feature>
<feature type="binding site" evidence="1">
    <location>
        <position position="62"/>
    </location>
    <ligand>
        <name>S-adenosyl-L-methionine</name>
        <dbReference type="ChEBI" id="CHEBI:59789"/>
    </ligand>
</feature>
<feature type="binding site" evidence="1">
    <location>
        <position position="80"/>
    </location>
    <ligand>
        <name>S-adenosyl-L-methionine</name>
        <dbReference type="ChEBI" id="CHEBI:59789"/>
    </ligand>
</feature>
<feature type="binding site" evidence="1">
    <location>
        <position position="96"/>
    </location>
    <ligand>
        <name>S-adenosyl-L-methionine</name>
        <dbReference type="ChEBI" id="CHEBI:59789"/>
    </ligand>
</feature>
<feature type="binding site" evidence="1">
    <location>
        <position position="121"/>
    </location>
    <ligand>
        <name>S-adenosyl-L-methionine</name>
        <dbReference type="ChEBI" id="CHEBI:59789"/>
    </ligand>
</feature>
<evidence type="ECO:0000255" key="1">
    <source>
        <dbReference type="HAMAP-Rule" id="MF_01547"/>
    </source>
</evidence>
<name>RLME_CHRVO</name>
<reference key="1">
    <citation type="journal article" date="2003" name="Proc. Natl. Acad. Sci. U.S.A.">
        <title>The complete genome sequence of Chromobacterium violaceum reveals remarkable and exploitable bacterial adaptability.</title>
        <authorList>
            <person name="Vasconcelos A.T.R."/>
            <person name="de Almeida D.F."/>
            <person name="Hungria M."/>
            <person name="Guimaraes C.T."/>
            <person name="Antonio R.V."/>
            <person name="Almeida F.C."/>
            <person name="de Almeida L.G.P."/>
            <person name="de Almeida R."/>
            <person name="Alves-Gomes J.A."/>
            <person name="Andrade E.M."/>
            <person name="Araripe J."/>
            <person name="de Araujo M.F.F."/>
            <person name="Astolfi-Filho S."/>
            <person name="Azevedo V."/>
            <person name="Baptista A.J."/>
            <person name="Bataus L.A.M."/>
            <person name="Batista J.S."/>
            <person name="Belo A."/>
            <person name="van den Berg C."/>
            <person name="Bogo M."/>
            <person name="Bonatto S."/>
            <person name="Bordignon J."/>
            <person name="Brigido M.M."/>
            <person name="Brito C.A."/>
            <person name="Brocchi M."/>
            <person name="Burity H.A."/>
            <person name="Camargo A.A."/>
            <person name="Cardoso D.D.P."/>
            <person name="Carneiro N.P."/>
            <person name="Carraro D.M."/>
            <person name="Carvalho C.M.B."/>
            <person name="Cascardo J.C.M."/>
            <person name="Cavada B.S."/>
            <person name="Chueire L.M.O."/>
            <person name="Creczynski-Pasa T.B."/>
            <person name="Cunha-Junior N.C."/>
            <person name="Fagundes N."/>
            <person name="Falcao C.L."/>
            <person name="Fantinatti F."/>
            <person name="Farias I.P."/>
            <person name="Felipe M.S.S."/>
            <person name="Ferrari L.P."/>
            <person name="Ferro J.A."/>
            <person name="Ferro M.I.T."/>
            <person name="Franco G.R."/>
            <person name="Freitas N.S.A."/>
            <person name="Furlan L.R."/>
            <person name="Gazzinelli R.T."/>
            <person name="Gomes E.A."/>
            <person name="Goncalves P.R."/>
            <person name="Grangeiro T.B."/>
            <person name="Grattapaglia D."/>
            <person name="Grisard E.C."/>
            <person name="Hanna E.S."/>
            <person name="Jardim S.N."/>
            <person name="Laurino J."/>
            <person name="Leoi L.C.T."/>
            <person name="Lima L.F.A."/>
            <person name="Loureiro M.F."/>
            <person name="Lyra M.C.C.P."/>
            <person name="Madeira H.M.F."/>
            <person name="Manfio G.P."/>
            <person name="Maranhao A.Q."/>
            <person name="Martins W.S."/>
            <person name="di Mauro S.M.Z."/>
            <person name="de Medeiros S.R.B."/>
            <person name="Meissner R.V."/>
            <person name="Moreira M.A.M."/>
            <person name="Nascimento F.F."/>
            <person name="Nicolas M.F."/>
            <person name="Oliveira J.G."/>
            <person name="Oliveira S.C."/>
            <person name="Paixao R.F.C."/>
            <person name="Parente J.A."/>
            <person name="Pedrosa F.O."/>
            <person name="Pena S.D.J."/>
            <person name="Pereira J.O."/>
            <person name="Pereira M."/>
            <person name="Pinto L.S.R.C."/>
            <person name="Pinto L.S."/>
            <person name="Porto J.I.R."/>
            <person name="Potrich D.P."/>
            <person name="Ramalho-Neto C.E."/>
            <person name="Reis A.M.M."/>
            <person name="Rigo L.U."/>
            <person name="Rondinelli E."/>
            <person name="Santos E.B.P."/>
            <person name="Santos F.R."/>
            <person name="Schneider M.P.C."/>
            <person name="Seuanez H.N."/>
            <person name="Silva A.M.R."/>
            <person name="da Silva A.L.C."/>
            <person name="Silva D.W."/>
            <person name="Silva R."/>
            <person name="Simoes I.C."/>
            <person name="Simon D."/>
            <person name="Soares C.M.A."/>
            <person name="Soares R.B.A."/>
            <person name="Souza E.M."/>
            <person name="Souza K.R.L."/>
            <person name="Souza R.C."/>
            <person name="Steffens M.B.R."/>
            <person name="Steindel M."/>
            <person name="Teixeira S.R."/>
            <person name="Urmenyi T."/>
            <person name="Vettore A."/>
            <person name="Wassem R."/>
            <person name="Zaha A."/>
            <person name="Simpson A.J.G."/>
        </authorList>
    </citation>
    <scope>NUCLEOTIDE SEQUENCE [LARGE SCALE GENOMIC DNA]</scope>
    <source>
        <strain>ATCC 12472 / DSM 30191 / JCM 1249 / CCUG 213 / NBRC 12614 / NCIMB 9131 / NCTC 9757 / MK</strain>
    </source>
</reference>
<dbReference type="EC" id="2.1.1.166" evidence="1"/>
<dbReference type="EMBL" id="AE016825">
    <property type="protein sequence ID" value="AAQ61460.1"/>
    <property type="molecule type" value="Genomic_DNA"/>
</dbReference>
<dbReference type="RefSeq" id="WP_011137345.1">
    <property type="nucleotide sequence ID" value="NC_005085.1"/>
</dbReference>
<dbReference type="SMR" id="Q7NRI3"/>
<dbReference type="STRING" id="243365.CV_3798"/>
<dbReference type="GeneID" id="66365032"/>
<dbReference type="KEGG" id="cvi:CV_3798"/>
<dbReference type="eggNOG" id="COG0293">
    <property type="taxonomic scope" value="Bacteria"/>
</dbReference>
<dbReference type="HOGENOM" id="CLU_009422_4_0_4"/>
<dbReference type="OrthoDB" id="9790080at2"/>
<dbReference type="Proteomes" id="UP000001424">
    <property type="component" value="Chromosome"/>
</dbReference>
<dbReference type="GO" id="GO:0005737">
    <property type="term" value="C:cytoplasm"/>
    <property type="evidence" value="ECO:0007669"/>
    <property type="project" value="UniProtKB-SubCell"/>
</dbReference>
<dbReference type="GO" id="GO:0008650">
    <property type="term" value="F:rRNA (uridine-2'-O-)-methyltransferase activity"/>
    <property type="evidence" value="ECO:0007669"/>
    <property type="project" value="UniProtKB-UniRule"/>
</dbReference>
<dbReference type="FunFam" id="3.40.50.150:FF:000005">
    <property type="entry name" value="Ribosomal RNA large subunit methyltransferase E"/>
    <property type="match status" value="1"/>
</dbReference>
<dbReference type="Gene3D" id="3.40.50.150">
    <property type="entry name" value="Vaccinia Virus protein VP39"/>
    <property type="match status" value="1"/>
</dbReference>
<dbReference type="HAMAP" id="MF_01547">
    <property type="entry name" value="RNA_methyltr_E"/>
    <property type="match status" value="1"/>
</dbReference>
<dbReference type="InterPro" id="IPR050082">
    <property type="entry name" value="RNA_methyltr_RlmE"/>
</dbReference>
<dbReference type="InterPro" id="IPR002877">
    <property type="entry name" value="RNA_MeTrfase_FtsJ_dom"/>
</dbReference>
<dbReference type="InterPro" id="IPR015507">
    <property type="entry name" value="rRNA-MeTfrase_E"/>
</dbReference>
<dbReference type="InterPro" id="IPR029063">
    <property type="entry name" value="SAM-dependent_MTases_sf"/>
</dbReference>
<dbReference type="NCBIfam" id="NF008390">
    <property type="entry name" value="PRK11188.1"/>
    <property type="match status" value="1"/>
</dbReference>
<dbReference type="PANTHER" id="PTHR10920">
    <property type="entry name" value="RIBOSOMAL RNA METHYLTRANSFERASE"/>
    <property type="match status" value="1"/>
</dbReference>
<dbReference type="PANTHER" id="PTHR10920:SF18">
    <property type="entry name" value="RRNA METHYLTRANSFERASE 2, MITOCHONDRIAL"/>
    <property type="match status" value="1"/>
</dbReference>
<dbReference type="Pfam" id="PF01728">
    <property type="entry name" value="FtsJ"/>
    <property type="match status" value="1"/>
</dbReference>
<dbReference type="PIRSF" id="PIRSF005461">
    <property type="entry name" value="23S_rRNA_mtase"/>
    <property type="match status" value="1"/>
</dbReference>
<dbReference type="SUPFAM" id="SSF53335">
    <property type="entry name" value="S-adenosyl-L-methionine-dependent methyltransferases"/>
    <property type="match status" value="1"/>
</dbReference>
<proteinExistence type="inferred from homology"/>
<organism>
    <name type="scientific">Chromobacterium violaceum (strain ATCC 12472 / DSM 30191 / JCM 1249 / CCUG 213 / NBRC 12614 / NCIMB 9131 / NCTC 9757 / MK)</name>
    <dbReference type="NCBI Taxonomy" id="243365"/>
    <lineage>
        <taxon>Bacteria</taxon>
        <taxon>Pseudomonadati</taxon>
        <taxon>Pseudomonadota</taxon>
        <taxon>Betaproteobacteria</taxon>
        <taxon>Neisseriales</taxon>
        <taxon>Chromobacteriaceae</taxon>
        <taxon>Chromobacterium</taxon>
    </lineage>
</organism>
<sequence length="205" mass="23088">MARSKSSNNWLQEHVNDQYVHMAQKDGYRARAAYKLLEINDKDKLIRPGTVLADLGSTPGSWSQVAARIVGEKGKVFALDILDMDPVPGVDFIQGDFREEAVLREFEQLLDGRALDLVISDMAPNMSGMSAIDQARSFLLCELALEFARDHLKPGGHFLVKVFQGSDFQPYLKAMRELFDEVVTRKPKASRDRSSEIYLLGKGRR</sequence>
<comment type="function">
    <text evidence="1">Specifically methylates the uridine in position 2552 of 23S rRNA at the 2'-O position of the ribose in the fully assembled 50S ribosomal subunit.</text>
</comment>
<comment type="catalytic activity">
    <reaction evidence="1">
        <text>uridine(2552) in 23S rRNA + S-adenosyl-L-methionine = 2'-O-methyluridine(2552) in 23S rRNA + S-adenosyl-L-homocysteine + H(+)</text>
        <dbReference type="Rhea" id="RHEA:42720"/>
        <dbReference type="Rhea" id="RHEA-COMP:10202"/>
        <dbReference type="Rhea" id="RHEA-COMP:10203"/>
        <dbReference type="ChEBI" id="CHEBI:15378"/>
        <dbReference type="ChEBI" id="CHEBI:57856"/>
        <dbReference type="ChEBI" id="CHEBI:59789"/>
        <dbReference type="ChEBI" id="CHEBI:65315"/>
        <dbReference type="ChEBI" id="CHEBI:74478"/>
        <dbReference type="EC" id="2.1.1.166"/>
    </reaction>
</comment>
<comment type="subcellular location">
    <subcellularLocation>
        <location evidence="1">Cytoplasm</location>
    </subcellularLocation>
</comment>
<comment type="similarity">
    <text evidence="1">Belongs to the class I-like SAM-binding methyltransferase superfamily. RNA methyltransferase RlmE family.</text>
</comment>
<accession>Q7NRI3</accession>